<accession>B7ICK4</accession>
<reference key="1">
    <citation type="journal article" date="2009" name="J. Bacteriol.">
        <title>The genome of Thermosipho africanus TCF52B: lateral genetic connections to the Firmicutes and Archaea.</title>
        <authorList>
            <person name="Nesboe C.L."/>
            <person name="Bapteste E."/>
            <person name="Curtis B."/>
            <person name="Dahle H."/>
            <person name="Lopez P."/>
            <person name="Macleod D."/>
            <person name="Dlutek M."/>
            <person name="Bowman S."/>
            <person name="Zhaxybayeva O."/>
            <person name="Birkeland N.-K."/>
            <person name="Doolittle W.F."/>
        </authorList>
    </citation>
    <scope>NUCLEOTIDE SEQUENCE [LARGE SCALE GENOMIC DNA]</scope>
    <source>
        <strain>TCF52B</strain>
    </source>
</reference>
<sequence length="402" mass="43596">MIKDIFFDQVKPAYGCTEPIAVALSTATAKKYLNETLEDLKEINITLDKNTYKNGLVVNIPGTNIFGLEIAAALGYLCGIPEKGLEVLKDVNSQCLSKATNLKNKIKIEINDMPYLYVETIAVSKDNHTVKILIEGKHDNIAKITIDSNTILDKPFNPSKTTLENIKKYSIDEIIDYVENPDKEVLDYVEKAIEMNIDIAKYGMQMKGNFSNAAINEYVKYVSAGVDARMSGVLKPVMTVAGSGNQGLSCILPIATKREEYDKEKILKATLLSILVTIYIKAYTGLLTPICGAGSISAAGSAAGLTYLKGGNRQQIKNAINDTIGTLFGLTCDGAKRGCALKAVTGTLTAIQVSELAINNIDVPCGNGIVAKDVEETIRRVGKLTNSVKQFDKDVLDYIGKC</sequence>
<keyword id="KW-1185">Reference proteome</keyword>
<protein>
    <recommendedName>
        <fullName evidence="1">UPF0597 protein THA_1286</fullName>
    </recommendedName>
</protein>
<organism>
    <name type="scientific">Thermosipho africanus (strain TCF52B)</name>
    <dbReference type="NCBI Taxonomy" id="484019"/>
    <lineage>
        <taxon>Bacteria</taxon>
        <taxon>Thermotogati</taxon>
        <taxon>Thermotogota</taxon>
        <taxon>Thermotogae</taxon>
        <taxon>Thermotogales</taxon>
        <taxon>Fervidobacteriaceae</taxon>
        <taxon>Thermosipho</taxon>
    </lineage>
</organism>
<proteinExistence type="inferred from homology"/>
<dbReference type="EMBL" id="CP001185">
    <property type="protein sequence ID" value="ACJ75731.1"/>
    <property type="molecule type" value="Genomic_DNA"/>
</dbReference>
<dbReference type="RefSeq" id="WP_004101568.1">
    <property type="nucleotide sequence ID" value="NC_011653.1"/>
</dbReference>
<dbReference type="SMR" id="B7ICK4"/>
<dbReference type="STRING" id="484019.THA_1286"/>
<dbReference type="KEGG" id="taf:THA_1286"/>
<dbReference type="eggNOG" id="COG3681">
    <property type="taxonomic scope" value="Bacteria"/>
</dbReference>
<dbReference type="HOGENOM" id="CLU_051840_0_0_0"/>
<dbReference type="OrthoDB" id="41906at2"/>
<dbReference type="Proteomes" id="UP000002453">
    <property type="component" value="Chromosome"/>
</dbReference>
<dbReference type="GO" id="GO:0080146">
    <property type="term" value="F:L-cysteine desulfhydrase activity"/>
    <property type="evidence" value="ECO:0007669"/>
    <property type="project" value="TreeGrafter"/>
</dbReference>
<dbReference type="GO" id="GO:0019450">
    <property type="term" value="P:L-cysteine catabolic process to pyruvate"/>
    <property type="evidence" value="ECO:0007669"/>
    <property type="project" value="TreeGrafter"/>
</dbReference>
<dbReference type="HAMAP" id="MF_01845">
    <property type="entry name" value="UPF0597"/>
    <property type="match status" value="1"/>
</dbReference>
<dbReference type="InterPro" id="IPR005130">
    <property type="entry name" value="Ser_deHydtase-like_asu"/>
</dbReference>
<dbReference type="InterPro" id="IPR021144">
    <property type="entry name" value="UPF0597"/>
</dbReference>
<dbReference type="PANTHER" id="PTHR30501">
    <property type="entry name" value="UPF0597 PROTEIN YHAM"/>
    <property type="match status" value="1"/>
</dbReference>
<dbReference type="PANTHER" id="PTHR30501:SF2">
    <property type="entry name" value="UPF0597 PROTEIN YHAM"/>
    <property type="match status" value="1"/>
</dbReference>
<dbReference type="Pfam" id="PF03313">
    <property type="entry name" value="SDH_alpha"/>
    <property type="match status" value="1"/>
</dbReference>
<dbReference type="PIRSF" id="PIRSF006054">
    <property type="entry name" value="UCP006054"/>
    <property type="match status" value="1"/>
</dbReference>
<comment type="similarity">
    <text evidence="1">Belongs to the UPF0597 family.</text>
</comment>
<gene>
    <name type="ordered locus">THA_1286</name>
</gene>
<evidence type="ECO:0000255" key="1">
    <source>
        <dbReference type="HAMAP-Rule" id="MF_01845"/>
    </source>
</evidence>
<name>Y1286_THEAB</name>
<feature type="chain" id="PRO_1000188474" description="UPF0597 protein THA_1286">
    <location>
        <begin position="1"/>
        <end position="402"/>
    </location>
</feature>